<reference key="1">
    <citation type="journal article" date="1991" name="Biochim. Biophys. Acta">
        <title>Characterization of genes that encode subunits of cucumber PS I complex by N-terminal sequencing.</title>
        <authorList>
            <person name="Iwasaki Y."/>
            <person name="Ishikawa H."/>
            <person name="Hibino T."/>
            <person name="Takabe T."/>
        </authorList>
    </citation>
    <scope>PROTEIN SEQUENCE</scope>
    <source>
        <tissue>Cotyledon</tissue>
    </source>
</reference>
<evidence type="ECO:0000250" key="1"/>
<evidence type="ECO:0000255" key="2"/>
<evidence type="ECO:0000305" key="3"/>
<sequence length="33" mass="3586">WDYIGSPTNVIMVISTSLMLFAGRFGLAPSANR</sequence>
<organism>
    <name type="scientific">Cucumis sativus</name>
    <name type="common">Cucumber</name>
    <dbReference type="NCBI Taxonomy" id="3659"/>
    <lineage>
        <taxon>Eukaryota</taxon>
        <taxon>Viridiplantae</taxon>
        <taxon>Streptophyta</taxon>
        <taxon>Embryophyta</taxon>
        <taxon>Tracheophyta</taxon>
        <taxon>Spermatophyta</taxon>
        <taxon>Magnoliopsida</taxon>
        <taxon>eudicotyledons</taxon>
        <taxon>Gunneridae</taxon>
        <taxon>Pentapetalae</taxon>
        <taxon>rosids</taxon>
        <taxon>fabids</taxon>
        <taxon>Cucurbitales</taxon>
        <taxon>Cucurbitaceae</taxon>
        <taxon>Benincaseae</taxon>
        <taxon>Cucumis</taxon>
    </lineage>
</organism>
<comment type="subcellular location">
    <subcellularLocation>
        <location evidence="1">Plastid</location>
        <location evidence="1">Chloroplast thylakoid membrane</location>
        <topology evidence="1">Multi-pass membrane protein</topology>
    </subcellularLocation>
</comment>
<comment type="similarity">
    <text evidence="3">Belongs to the PsaG/PsaK family.</text>
</comment>
<proteinExistence type="evidence at protein level"/>
<gene>
    <name type="primary">PSAK</name>
</gene>
<accession>P42051</accession>
<feature type="chain" id="PRO_0000206209" description="Photosystem I reaction center subunit psaK, chloroplastic">
    <location>
        <begin position="1"/>
        <end position="33" status="greater than"/>
    </location>
</feature>
<feature type="transmembrane region" description="Helical" evidence="2">
    <location>
        <begin position="3"/>
        <end position="23"/>
    </location>
</feature>
<feature type="non-terminal residue">
    <location>
        <position position="33"/>
    </location>
</feature>
<dbReference type="PIR" id="A56819">
    <property type="entry name" value="A56819"/>
</dbReference>
<dbReference type="SMR" id="P42051"/>
<dbReference type="eggNOG" id="ENOG502RZHF">
    <property type="taxonomic scope" value="Eukaryota"/>
</dbReference>
<dbReference type="GO" id="GO:0009535">
    <property type="term" value="C:chloroplast thylakoid membrane"/>
    <property type="evidence" value="ECO:0007669"/>
    <property type="project" value="UniProtKB-SubCell"/>
</dbReference>
<dbReference type="GO" id="GO:0009522">
    <property type="term" value="C:photosystem I"/>
    <property type="evidence" value="ECO:0007669"/>
    <property type="project" value="UniProtKB-KW"/>
</dbReference>
<dbReference type="GO" id="GO:0015979">
    <property type="term" value="P:photosynthesis"/>
    <property type="evidence" value="ECO:0007669"/>
    <property type="project" value="UniProtKB-KW"/>
</dbReference>
<dbReference type="Gene3D" id="1.10.286.40">
    <property type="entry name" value="Chlorophyll a-b binding protein like"/>
    <property type="match status" value="1"/>
</dbReference>
<dbReference type="InterPro" id="IPR023618">
    <property type="entry name" value="PSI_PsaG/PsaK_dom"/>
</dbReference>
<keyword id="KW-0150">Chloroplast</keyword>
<keyword id="KW-0903">Direct protein sequencing</keyword>
<keyword id="KW-0472">Membrane</keyword>
<keyword id="KW-0602">Photosynthesis</keyword>
<keyword id="KW-0603">Photosystem I</keyword>
<keyword id="KW-0934">Plastid</keyword>
<keyword id="KW-0793">Thylakoid</keyword>
<keyword id="KW-0812">Transmembrane</keyword>
<keyword id="KW-1133">Transmembrane helix</keyword>
<name>PSAK_CUCSA</name>
<protein>
    <recommendedName>
        <fullName>Photosystem I reaction center subunit psaK, chloroplastic</fullName>
    </recommendedName>
    <alternativeName>
        <fullName>PS I subunit 12</fullName>
    </alternativeName>
    <alternativeName>
        <fullName>PSI-K</fullName>
    </alternativeName>
    <alternativeName>
        <fullName>Photosystem I 4.5 kDa protein</fullName>
    </alternativeName>
    <alternativeName>
        <fullName>Photosystem I subunit X</fullName>
    </alternativeName>
</protein>